<sequence>MGKVKVGINGFGRIGRLVTRAAFNSGKVDIVAINDPFIDLNYMVYMFQYDSTHGKFHGTVKAENGKLVINGNPITIFQERDPSKIKWGDAGAEYVVESTGVFTTMEKAGAHLQGGAKRVIISAPSADAPMFVMGVNHEKYDNSLKIVSNASCTTNCLAPLAKVIHDNFGIVEGLMTTVHAITATQKTVDGPSGKLWRDGRGALQNIIPASTGAAKAVGKVIPELNGKLTGMAFRVPTANVSVVDLTCRLEKAAKYDDIKKVVKQASEGPLKGILGYTEHQVVSSDLNSDTHSSTFDAGAGIALNDHFVKLISWYDNEFGYSNRVVDLMAHMASKE</sequence>
<accession>Q5RAB4</accession>
<organism>
    <name type="scientific">Pongo abelii</name>
    <name type="common">Sumatran orangutan</name>
    <name type="synonym">Pongo pygmaeus abelii</name>
    <dbReference type="NCBI Taxonomy" id="9601"/>
    <lineage>
        <taxon>Eukaryota</taxon>
        <taxon>Metazoa</taxon>
        <taxon>Chordata</taxon>
        <taxon>Craniata</taxon>
        <taxon>Vertebrata</taxon>
        <taxon>Euteleostomi</taxon>
        <taxon>Mammalia</taxon>
        <taxon>Eutheria</taxon>
        <taxon>Euarchontoglires</taxon>
        <taxon>Primates</taxon>
        <taxon>Haplorrhini</taxon>
        <taxon>Catarrhini</taxon>
        <taxon>Hominidae</taxon>
        <taxon>Pongo</taxon>
    </lineage>
</organism>
<feature type="chain" id="PRO_0000145492" description="Glyceraldehyde-3-phosphate dehydrogenase">
    <location>
        <begin position="1"/>
        <end position="335"/>
    </location>
</feature>
<feature type="region of interest" description="Interaction with WARS1" evidence="1">
    <location>
        <begin position="1"/>
        <end position="148"/>
    </location>
</feature>
<feature type="short sequence motif" description="[IL]-x-C-x-x-[DE] motif" evidence="1">
    <location>
        <begin position="245"/>
        <end position="250"/>
    </location>
</feature>
<feature type="active site" description="Nucleophile" evidence="6">
    <location>
        <position position="152"/>
    </location>
</feature>
<feature type="binding site" evidence="1">
    <location>
        <begin position="13"/>
        <end position="14"/>
    </location>
    <ligand>
        <name>NAD(+)</name>
        <dbReference type="ChEBI" id="CHEBI:57540"/>
    </ligand>
</feature>
<feature type="binding site" evidence="1">
    <location>
        <position position="35"/>
    </location>
    <ligand>
        <name>NAD(+)</name>
        <dbReference type="ChEBI" id="CHEBI:57540"/>
    </ligand>
</feature>
<feature type="binding site" evidence="1">
    <location>
        <position position="80"/>
    </location>
    <ligand>
        <name>NAD(+)</name>
        <dbReference type="ChEBI" id="CHEBI:57540"/>
    </ligand>
</feature>
<feature type="binding site" evidence="1">
    <location>
        <position position="122"/>
    </location>
    <ligand>
        <name>NAD(+)</name>
        <dbReference type="ChEBI" id="CHEBI:57540"/>
    </ligand>
</feature>
<feature type="binding site" evidence="5">
    <location>
        <begin position="151"/>
        <end position="153"/>
    </location>
    <ligand>
        <name>D-glyceraldehyde 3-phosphate</name>
        <dbReference type="ChEBI" id="CHEBI:59776"/>
    </ligand>
</feature>
<feature type="binding site" evidence="5">
    <location>
        <position position="182"/>
    </location>
    <ligand>
        <name>D-glyceraldehyde 3-phosphate</name>
        <dbReference type="ChEBI" id="CHEBI:59776"/>
    </ligand>
</feature>
<feature type="binding site" evidence="5">
    <location>
        <begin position="211"/>
        <end position="212"/>
    </location>
    <ligand>
        <name>D-glyceraldehyde 3-phosphate</name>
        <dbReference type="ChEBI" id="CHEBI:59776"/>
    </ligand>
</feature>
<feature type="binding site" evidence="5">
    <location>
        <position position="234"/>
    </location>
    <ligand>
        <name>D-glyceraldehyde 3-phosphate</name>
        <dbReference type="ChEBI" id="CHEBI:59776"/>
    </ligand>
</feature>
<feature type="binding site" evidence="1">
    <location>
        <position position="316"/>
    </location>
    <ligand>
        <name>NAD(+)</name>
        <dbReference type="ChEBI" id="CHEBI:57540"/>
    </ligand>
</feature>
<feature type="site" description="Activates thiol group during catalysis" evidence="1">
    <location>
        <position position="179"/>
    </location>
</feature>
<feature type="modified residue" description="N6,N6-dimethyllysine" evidence="1">
    <location>
        <position position="5"/>
    </location>
</feature>
<feature type="modified residue" description="Deamidated asparagine" evidence="1">
    <location>
        <position position="9"/>
    </location>
</feature>
<feature type="modified residue" description="Phosphotyrosine" evidence="1">
    <location>
        <position position="42"/>
    </location>
</feature>
<feature type="modified residue" description="N6-acetyllysine" evidence="1">
    <location>
        <position position="61"/>
    </location>
</feature>
<feature type="modified residue" description="Deamidated asparagine" evidence="1">
    <location>
        <position position="64"/>
    </location>
</feature>
<feature type="modified residue" description="N6,N6-dimethyllysine" evidence="1">
    <location>
        <position position="66"/>
    </location>
</feature>
<feature type="modified residue" description="Deamidated asparagine" evidence="1">
    <location>
        <position position="70"/>
    </location>
</feature>
<feature type="modified residue" description="Phosphothreonine" evidence="1">
    <location>
        <position position="75"/>
    </location>
</feature>
<feature type="modified residue" description="Phosphoserine" evidence="1">
    <location>
        <position position="122"/>
    </location>
</feature>
<feature type="modified residue" description="Phosphoserine" evidence="1">
    <location>
        <position position="148"/>
    </location>
</feature>
<feature type="modified residue" description="Deamidated asparagine" evidence="1">
    <location>
        <position position="149"/>
    </location>
</feature>
<feature type="modified residue" description="Phosphoserine" evidence="1">
    <location>
        <position position="151"/>
    </location>
</feature>
<feature type="modified residue" description="ADP-ribosylcysteine; by autocatalysis; in irreversibly inhibited form" evidence="2">
    <location>
        <position position="152"/>
    </location>
</feature>
<feature type="modified residue" description="Cysteine persulfide" evidence="4">
    <location>
        <position position="152"/>
    </location>
</feature>
<feature type="modified residue" description="S-(2-succinyl)cysteine" evidence="2">
    <location>
        <position position="152"/>
    </location>
</feature>
<feature type="modified residue" description="S-nitrosocysteine; in reversibly inhibited form" evidence="2">
    <location>
        <position position="152"/>
    </location>
</feature>
<feature type="modified residue" description="Phosphothreonine" evidence="1">
    <location>
        <position position="153"/>
    </location>
</feature>
<feature type="modified residue" description="Deamidated asparagine" evidence="1">
    <location>
        <position position="155"/>
    </location>
</feature>
<feature type="modified residue" description="Phosphothreonine" evidence="1">
    <location>
        <position position="177"/>
    </location>
</feature>
<feature type="modified residue" description="Phosphothreonine" evidence="1">
    <location>
        <position position="182"/>
    </location>
</feature>
<feature type="modified residue" description="Phosphothreonine" evidence="1">
    <location>
        <position position="184"/>
    </location>
</feature>
<feature type="modified residue" description="N6,N6-dimethyllysine; alternate" evidence="1">
    <location>
        <position position="194"/>
    </location>
</feature>
<feature type="modified residue" description="N6-acetyllysine; alternate" evidence="1">
    <location>
        <position position="194"/>
    </location>
</feature>
<feature type="modified residue" description="N6-malonyllysine; alternate" evidence="1">
    <location>
        <position position="194"/>
    </location>
</feature>
<feature type="modified residue" description="Phosphothreonine" evidence="1">
    <location>
        <position position="211"/>
    </location>
</feature>
<feature type="modified residue" description="N6,N6-dimethyllysine; alternate" evidence="1">
    <location>
        <position position="215"/>
    </location>
</feature>
<feature type="modified residue" description="N6-malonyllysine; alternate" evidence="1">
    <location>
        <position position="215"/>
    </location>
</feature>
<feature type="modified residue" description="N6-acetyllysine" evidence="1">
    <location>
        <position position="219"/>
    </location>
</feature>
<feature type="modified residue" description="Deamidated asparagine" evidence="1">
    <location>
        <position position="225"/>
    </location>
</feature>
<feature type="modified residue" description="N6,N6-dimethyllysine; alternate" evidence="1">
    <location>
        <position position="227"/>
    </location>
</feature>
<feature type="modified residue" description="N6-acetyllysine; alternate" evidence="1">
    <location>
        <position position="227"/>
    </location>
</feature>
<feature type="modified residue" description="Phosphothreonine" evidence="1">
    <location>
        <position position="229"/>
    </location>
</feature>
<feature type="modified residue" description="Phosphothreonine" evidence="1">
    <location>
        <position position="237"/>
    </location>
</feature>
<feature type="modified residue" description="Phosphoserine" evidence="1">
    <location>
        <position position="241"/>
    </location>
</feature>
<feature type="modified residue" description="S-(2-succinyl)cysteine" evidence="2">
    <location>
        <position position="247"/>
    </location>
</feature>
<feature type="modified residue" description="S-nitrosocysteine" evidence="1">
    <location>
        <position position="247"/>
    </location>
</feature>
<feature type="modified residue" description="N6-acetyllysine" evidence="1">
    <location>
        <position position="254"/>
    </location>
</feature>
<feature type="modified residue" description="N6,N6-dimethyllysine" evidence="1">
    <location>
        <position position="260"/>
    </location>
</feature>
<feature type="modified residue" description="N6,N6-dimethyllysine" evidence="1">
    <location>
        <position position="263"/>
    </location>
</feature>
<feature type="modified residue" description="Phosphoserine" evidence="1">
    <location>
        <position position="312"/>
    </location>
</feature>
<feature type="modified residue" description="Deamidated asparagine" evidence="1">
    <location>
        <position position="316"/>
    </location>
</feature>
<feature type="modified residue" description="Phosphoserine" evidence="1">
    <location>
        <position position="333"/>
    </location>
</feature>
<feature type="modified residue" description="N6,N6-dimethyllysine" evidence="1">
    <location>
        <position position="334"/>
    </location>
</feature>
<feature type="cross-link" description="Glycyl lysine isopeptide (Lys-Gly) (interchain with G-Cter in SUMO2)" evidence="1">
    <location>
        <position position="186"/>
    </location>
</feature>
<keyword id="KW-0007">Acetylation</keyword>
<keyword id="KW-0013">ADP-ribosylation</keyword>
<keyword id="KW-0053">Apoptosis</keyword>
<keyword id="KW-0963">Cytoplasm</keyword>
<keyword id="KW-0206">Cytoskeleton</keyword>
<keyword id="KW-0324">Glycolysis</keyword>
<keyword id="KW-0391">Immunity</keyword>
<keyword id="KW-0399">Innate immunity</keyword>
<keyword id="KW-1017">Isopeptide bond</keyword>
<keyword id="KW-0488">Methylation</keyword>
<keyword id="KW-0520">NAD</keyword>
<keyword id="KW-0539">Nucleus</keyword>
<keyword id="KW-0560">Oxidoreductase</keyword>
<keyword id="KW-0597">Phosphoprotein</keyword>
<keyword id="KW-1185">Reference proteome</keyword>
<keyword id="KW-0702">S-nitrosylation</keyword>
<keyword id="KW-0808">Transferase</keyword>
<keyword id="KW-0810">Translation regulation</keyword>
<keyword id="KW-0832">Ubl conjugation</keyword>
<comment type="function">
    <text evidence="1 2">Has both glyceraldehyde-3-phosphate dehydrogenase and nitrosylase activities, thereby playing a role in glycolysis and nuclear functions, respectively. Glyceraldehyde-3-phosphate dehydrogenase is a key enzyme in glycolysis that catalyzes the first step of the pathway by converting D-glyceraldehyde 3-phosphate (G3P) into 3-phospho-D-glyceroyl phosphate (By similarity). Modulates the organization and assembly of the cytoskeleton. Facilitates the CHP1-dependent microtubule and membrane associations through its ability to stimulate the binding of CHP1 to microtubules (By similarity). Component of the GAIT (gamma interferon-activated inhibitor of translation) complex which mediates interferon-gamma-induced transcript-selective translation inhibition in inflammation processes. Upon interferon-gamma treatment assembles into the GAIT complex which binds to stem loop-containing GAIT elements in the 3'-UTR of diverse inflammatory mRNAs (such as ceruplasmin) and suppresses their translation. Also plays a role in innate immunity by promoting TNF-induced NF-kappa-B activation and type I interferon production, via interaction with TRAF2 and TRAF3, respectively (By similarity). Participates in nuclear events including transcription, RNA transport, DNA replication and apoptosis. Nuclear functions are probably due to the nitrosylase activity that mediates cysteine S-nitrosylation of nuclear target proteins such as SIRT1, HDAC2 and PRKDC (By similarity).</text>
</comment>
<comment type="catalytic activity">
    <reaction evidence="1 6">
        <text>D-glyceraldehyde 3-phosphate + phosphate + NAD(+) = (2R)-3-phospho-glyceroyl phosphate + NADH + H(+)</text>
        <dbReference type="Rhea" id="RHEA:10300"/>
        <dbReference type="ChEBI" id="CHEBI:15378"/>
        <dbReference type="ChEBI" id="CHEBI:43474"/>
        <dbReference type="ChEBI" id="CHEBI:57540"/>
        <dbReference type="ChEBI" id="CHEBI:57604"/>
        <dbReference type="ChEBI" id="CHEBI:57945"/>
        <dbReference type="ChEBI" id="CHEBI:59776"/>
        <dbReference type="EC" id="1.2.1.12"/>
    </reaction>
</comment>
<comment type="catalytic activity">
    <reaction evidence="2">
        <text>S-nitroso-L-cysteinyl-[GAPDH] + L-cysteinyl-[protein] = L-cysteinyl-[GAPDH] + S-nitroso-L-cysteinyl-[protein]</text>
        <dbReference type="Rhea" id="RHEA:66684"/>
        <dbReference type="Rhea" id="RHEA-COMP:10131"/>
        <dbReference type="Rhea" id="RHEA-COMP:17089"/>
        <dbReference type="Rhea" id="RHEA-COMP:17090"/>
        <dbReference type="Rhea" id="RHEA-COMP:17091"/>
        <dbReference type="ChEBI" id="CHEBI:29950"/>
        <dbReference type="ChEBI" id="CHEBI:149494"/>
    </reaction>
    <physiologicalReaction direction="left-to-right" evidence="2">
        <dbReference type="Rhea" id="RHEA:66685"/>
    </physiologicalReaction>
</comment>
<comment type="activity regulation">
    <text evidence="2">Glyceraldehyde-3-phosphate dehydrogenase activity is inhibited by fumarate, via the formation of S-(2-succinyl)cysteine residues.</text>
</comment>
<comment type="pathway">
    <text>Carbohydrate degradation; glycolysis; pyruvate from D-glyceraldehyde 3-phosphate: step 1/5.</text>
</comment>
<comment type="subunit">
    <text evidence="1 2 3">Homotetramer (By similarity). Interacts with TPPP; the interaction is direct (By similarity). Interacts (when S-nitrosylated) with SIAH1; leading to nuclear translocation. Interacts with RILPL1/GOSPEL, leading to prevent the interaction between GAPDH and SIAH1 and prevent nuclear translocation. Interacts with CHP1; the interaction increases the binding of CHP1 with microtubules. Associates with microtubules (By similarity). Interacts with EIF1AD, USP25, PRKCI and WARS1. Interacts with phosphorylated RPL13A; inhibited by oxidatively-modified low-densitity lipoprotein (LDL(ox)). Component of the GAIT complex. Interacts with FKBP6; leading to inhibit GAPDH catalytic activity. Interacts with TRAF2, promoting TRAF2 ubiquitination. Interacts with TRAF3, promoting TRAF3 ubiquitination (By similarity).</text>
</comment>
<comment type="subcellular location">
    <subcellularLocation>
        <location evidence="2">Cytoplasm</location>
        <location evidence="2">Cytosol</location>
    </subcellularLocation>
    <subcellularLocation>
        <location evidence="2">Cytoplasm</location>
        <location evidence="2">Cytoskeleton</location>
    </subcellularLocation>
    <subcellularLocation>
        <location evidence="2">Nucleus</location>
    </subcellularLocation>
    <text evidence="2">Translocates to the nucleus following S-nitrosylation and interaction with SIAH1, which contains a nuclear localization signal. Colocalizes with CHP1 to small punctate structures along the microtubules tracks.</text>
</comment>
<comment type="domain">
    <text evidence="1">The [IL]-x-C-x-x-[DE] motif is a proposed target motif for cysteine S-nitrosylation mediated by the iNOS-S100A8/A9 transnitrosylase complex.</text>
</comment>
<comment type="PTM">
    <text evidence="1">ISGylated.</text>
</comment>
<comment type="PTM">
    <text evidence="1 2">S-nitrosylation of Cys-152 leads to interaction with SIAH1, followed by translocation to the nucleus S-nitrosylation of Cys-247 is induced by interferon-gamma and LDL(ox) implicating the iNOS-S100A8/9 transnitrosylase complex and seems to prevent interaction with phosphorylated RPL13A and to interfere with GAIT complex activity (By similarity).</text>
</comment>
<comment type="PTM">
    <text evidence="4">Sulfhydration at Cys-152 increases catalytic activity.</text>
</comment>
<comment type="PTM">
    <text evidence="1">Oxidative stress can promote the formation of high molecular weight disulfide-linked GAPDH aggregates, through a process called nucleocytoplasmic coagulation.</text>
</comment>
<comment type="similarity">
    <text evidence="7">Belongs to the glyceraldehyde-3-phosphate dehydrogenase family.</text>
</comment>
<dbReference type="EC" id="1.2.1.12" evidence="1"/>
<dbReference type="EC" id="2.6.99.-" evidence="2"/>
<dbReference type="EMBL" id="CR859104">
    <property type="protein sequence ID" value="CAH91296.1"/>
    <property type="molecule type" value="mRNA"/>
</dbReference>
<dbReference type="RefSeq" id="NP_001125767.1">
    <property type="nucleotide sequence ID" value="NM_001132295.2"/>
</dbReference>
<dbReference type="SMR" id="Q5RAB4"/>
<dbReference type="STRING" id="9601.ENSPPYP00000004774"/>
<dbReference type="GeneID" id="100172694"/>
<dbReference type="KEGG" id="pon:100172694"/>
<dbReference type="CTD" id="2597"/>
<dbReference type="eggNOG" id="KOG0657">
    <property type="taxonomic scope" value="Eukaryota"/>
</dbReference>
<dbReference type="InParanoid" id="Q5RAB4"/>
<dbReference type="OrthoDB" id="9528699at2759"/>
<dbReference type="UniPathway" id="UPA00109">
    <property type="reaction ID" value="UER00184"/>
</dbReference>
<dbReference type="Proteomes" id="UP000001595">
    <property type="component" value="Unplaced"/>
</dbReference>
<dbReference type="GO" id="GO:0005737">
    <property type="term" value="C:cytoplasm"/>
    <property type="evidence" value="ECO:0000250"/>
    <property type="project" value="UniProtKB"/>
</dbReference>
<dbReference type="GO" id="GO:0005829">
    <property type="term" value="C:cytosol"/>
    <property type="evidence" value="ECO:0000250"/>
    <property type="project" value="UniProtKB"/>
</dbReference>
<dbReference type="GO" id="GO:0097452">
    <property type="term" value="C:GAIT complex"/>
    <property type="evidence" value="ECO:0000250"/>
    <property type="project" value="UniProtKB"/>
</dbReference>
<dbReference type="GO" id="GO:0015630">
    <property type="term" value="C:microtubule cytoskeleton"/>
    <property type="evidence" value="ECO:0000250"/>
    <property type="project" value="UniProtKB"/>
</dbReference>
<dbReference type="GO" id="GO:0005634">
    <property type="term" value="C:nucleus"/>
    <property type="evidence" value="ECO:0000250"/>
    <property type="project" value="UniProtKB"/>
</dbReference>
<dbReference type="GO" id="GO:0004365">
    <property type="term" value="F:glyceraldehyde-3-phosphate dehydrogenase (NAD+) (phosphorylating) activity"/>
    <property type="evidence" value="ECO:0000250"/>
    <property type="project" value="UniProtKB"/>
</dbReference>
<dbReference type="GO" id="GO:0008017">
    <property type="term" value="F:microtubule binding"/>
    <property type="evidence" value="ECO:0000250"/>
    <property type="project" value="UniProtKB"/>
</dbReference>
<dbReference type="GO" id="GO:0051287">
    <property type="term" value="F:NAD binding"/>
    <property type="evidence" value="ECO:0007669"/>
    <property type="project" value="InterPro"/>
</dbReference>
<dbReference type="GO" id="GO:0050661">
    <property type="term" value="F:NADP binding"/>
    <property type="evidence" value="ECO:0007669"/>
    <property type="project" value="InterPro"/>
</dbReference>
<dbReference type="GO" id="GO:0035605">
    <property type="term" value="F:peptidyl-cysteine S-nitrosylase activity"/>
    <property type="evidence" value="ECO:0000250"/>
    <property type="project" value="UniProtKB"/>
</dbReference>
<dbReference type="GO" id="GO:0006006">
    <property type="term" value="P:glucose metabolic process"/>
    <property type="evidence" value="ECO:0007669"/>
    <property type="project" value="InterPro"/>
</dbReference>
<dbReference type="GO" id="GO:0006096">
    <property type="term" value="P:glycolytic process"/>
    <property type="evidence" value="ECO:0007669"/>
    <property type="project" value="UniProtKB-UniPathway"/>
</dbReference>
<dbReference type="GO" id="GO:0045087">
    <property type="term" value="P:innate immune response"/>
    <property type="evidence" value="ECO:0007669"/>
    <property type="project" value="UniProtKB-KW"/>
</dbReference>
<dbReference type="GO" id="GO:0000226">
    <property type="term" value="P:microtubule cytoskeleton organization"/>
    <property type="evidence" value="ECO:0000250"/>
    <property type="project" value="UniProtKB"/>
</dbReference>
<dbReference type="GO" id="GO:0051402">
    <property type="term" value="P:neuron apoptotic process"/>
    <property type="evidence" value="ECO:0000250"/>
    <property type="project" value="UniProtKB"/>
</dbReference>
<dbReference type="GO" id="GO:0035606">
    <property type="term" value="P:peptidyl-cysteine S-trans-nitrosylation"/>
    <property type="evidence" value="ECO:0000250"/>
    <property type="project" value="UniProtKB"/>
</dbReference>
<dbReference type="GO" id="GO:0043123">
    <property type="term" value="P:positive regulation of canonical NF-kappaB signal transduction"/>
    <property type="evidence" value="ECO:0000250"/>
    <property type="project" value="UniProtKB"/>
</dbReference>
<dbReference type="GO" id="GO:0032481">
    <property type="term" value="P:positive regulation of type I interferon production"/>
    <property type="evidence" value="ECO:0000250"/>
    <property type="project" value="UniProtKB"/>
</dbReference>
<dbReference type="GO" id="GO:0050821">
    <property type="term" value="P:protein stabilization"/>
    <property type="evidence" value="ECO:0000250"/>
    <property type="project" value="UniProtKB"/>
</dbReference>
<dbReference type="GO" id="GO:0006417">
    <property type="term" value="P:regulation of translation"/>
    <property type="evidence" value="ECO:0007669"/>
    <property type="project" value="UniProtKB-KW"/>
</dbReference>
<dbReference type="CDD" id="cd18126">
    <property type="entry name" value="GAPDH_I_C"/>
    <property type="match status" value="1"/>
</dbReference>
<dbReference type="CDD" id="cd05214">
    <property type="entry name" value="GAPDH_I_N"/>
    <property type="match status" value="1"/>
</dbReference>
<dbReference type="FunFam" id="3.30.360.10:FF:000001">
    <property type="entry name" value="Glyceraldehyde-3-phosphate dehydrogenase"/>
    <property type="match status" value="1"/>
</dbReference>
<dbReference type="FunFam" id="3.40.50.720:FF:001161">
    <property type="entry name" value="Glyceraldehyde-3-phosphate dehydrogenase"/>
    <property type="match status" value="1"/>
</dbReference>
<dbReference type="Gene3D" id="3.30.360.10">
    <property type="entry name" value="Dihydrodipicolinate Reductase, domain 2"/>
    <property type="match status" value="1"/>
</dbReference>
<dbReference type="Gene3D" id="3.40.50.720">
    <property type="entry name" value="NAD(P)-binding Rossmann-like Domain"/>
    <property type="match status" value="1"/>
</dbReference>
<dbReference type="InterPro" id="IPR020831">
    <property type="entry name" value="GlycerAld/Erythrose_P_DH"/>
</dbReference>
<dbReference type="InterPro" id="IPR020830">
    <property type="entry name" value="GlycerAld_3-P_DH_AS"/>
</dbReference>
<dbReference type="InterPro" id="IPR020829">
    <property type="entry name" value="GlycerAld_3-P_DH_cat"/>
</dbReference>
<dbReference type="InterPro" id="IPR020828">
    <property type="entry name" value="GlycerAld_3-P_DH_NAD(P)-bd"/>
</dbReference>
<dbReference type="InterPro" id="IPR006424">
    <property type="entry name" value="Glyceraldehyde-3-P_DH_1"/>
</dbReference>
<dbReference type="InterPro" id="IPR036291">
    <property type="entry name" value="NAD(P)-bd_dom_sf"/>
</dbReference>
<dbReference type="NCBIfam" id="TIGR01534">
    <property type="entry name" value="GAPDH-I"/>
    <property type="match status" value="1"/>
</dbReference>
<dbReference type="PANTHER" id="PTHR10836">
    <property type="entry name" value="GLYCERALDEHYDE 3-PHOSPHATE DEHYDROGENASE"/>
    <property type="match status" value="1"/>
</dbReference>
<dbReference type="PANTHER" id="PTHR10836:SF111">
    <property type="entry name" value="GLYCERALDEHYDE-3-PHOSPHATE DEHYDROGENASE"/>
    <property type="match status" value="1"/>
</dbReference>
<dbReference type="Pfam" id="PF02800">
    <property type="entry name" value="Gp_dh_C"/>
    <property type="match status" value="1"/>
</dbReference>
<dbReference type="Pfam" id="PF00044">
    <property type="entry name" value="Gp_dh_N"/>
    <property type="match status" value="1"/>
</dbReference>
<dbReference type="PIRSF" id="PIRSF000149">
    <property type="entry name" value="GAP_DH"/>
    <property type="match status" value="1"/>
</dbReference>
<dbReference type="PRINTS" id="PR00078">
    <property type="entry name" value="G3PDHDRGNASE"/>
</dbReference>
<dbReference type="SMART" id="SM00846">
    <property type="entry name" value="Gp_dh_N"/>
    <property type="match status" value="1"/>
</dbReference>
<dbReference type="SUPFAM" id="SSF55347">
    <property type="entry name" value="Glyceraldehyde-3-phosphate dehydrogenase-like, C-terminal domain"/>
    <property type="match status" value="1"/>
</dbReference>
<dbReference type="SUPFAM" id="SSF51735">
    <property type="entry name" value="NAD(P)-binding Rossmann-fold domains"/>
    <property type="match status" value="1"/>
</dbReference>
<dbReference type="PROSITE" id="PS00071">
    <property type="entry name" value="GAPDH"/>
    <property type="match status" value="1"/>
</dbReference>
<evidence type="ECO:0000250" key="1">
    <source>
        <dbReference type="UniProtKB" id="P04406"/>
    </source>
</evidence>
<evidence type="ECO:0000250" key="2">
    <source>
        <dbReference type="UniProtKB" id="P04797"/>
    </source>
</evidence>
<evidence type="ECO:0000250" key="3">
    <source>
        <dbReference type="UniProtKB" id="P10096"/>
    </source>
</evidence>
<evidence type="ECO:0000250" key="4">
    <source>
        <dbReference type="UniProtKB" id="P16858"/>
    </source>
</evidence>
<evidence type="ECO:0000250" key="5">
    <source>
        <dbReference type="UniProtKB" id="P22513"/>
    </source>
</evidence>
<evidence type="ECO:0000255" key="6">
    <source>
        <dbReference type="PROSITE-ProRule" id="PRU10009"/>
    </source>
</evidence>
<evidence type="ECO:0000305" key="7"/>
<proteinExistence type="evidence at transcript level"/>
<protein>
    <recommendedName>
        <fullName>Glyceraldehyde-3-phosphate dehydrogenase</fullName>
        <shortName>GAPDH</shortName>
        <ecNumber evidence="1">1.2.1.12</ecNumber>
    </recommendedName>
    <alternativeName>
        <fullName evidence="7">Peptidyl-cysteine S-nitrosylase GAPDH</fullName>
        <ecNumber evidence="2">2.6.99.-</ecNumber>
    </alternativeName>
</protein>
<name>G3P_PONAB</name>
<reference key="1">
    <citation type="submission" date="2004-11" db="EMBL/GenBank/DDBJ databases">
        <authorList>
            <consortium name="The German cDNA consortium"/>
        </authorList>
    </citation>
    <scope>NUCLEOTIDE SEQUENCE [LARGE SCALE MRNA]</scope>
    <source>
        <tissue>Heart</tissue>
    </source>
</reference>
<gene>
    <name type="primary">GAPDH</name>
    <name type="synonym">GAPD</name>
</gene>